<evidence type="ECO:0000250" key="1"/>
<evidence type="ECO:0000255" key="2">
    <source>
        <dbReference type="HAMAP-Rule" id="MF_01057"/>
    </source>
</evidence>
<evidence type="ECO:0000256" key="3">
    <source>
        <dbReference type="SAM" id="MobiDB-lite"/>
    </source>
</evidence>
<organism>
    <name type="scientific">Mycobacterium ulcerans (strain Agy99)</name>
    <dbReference type="NCBI Taxonomy" id="362242"/>
    <lineage>
        <taxon>Bacteria</taxon>
        <taxon>Bacillati</taxon>
        <taxon>Actinomycetota</taxon>
        <taxon>Actinomycetes</taxon>
        <taxon>Mycobacteriales</taxon>
        <taxon>Mycobacteriaceae</taxon>
        <taxon>Mycobacterium</taxon>
        <taxon>Mycobacterium ulcerans group</taxon>
    </lineage>
</organism>
<gene>
    <name evidence="2" type="primary">trmB</name>
    <name type="ordered locus">MUL_1098</name>
</gene>
<dbReference type="EC" id="2.1.1.33" evidence="2"/>
<dbReference type="EMBL" id="CP000325">
    <property type="protein sequence ID" value="ABL03687.1"/>
    <property type="molecule type" value="Genomic_DNA"/>
</dbReference>
<dbReference type="RefSeq" id="WP_011739309.1">
    <property type="nucleotide sequence ID" value="NC_008611.1"/>
</dbReference>
<dbReference type="SMR" id="A0PMW8"/>
<dbReference type="KEGG" id="mul:MUL_1098"/>
<dbReference type="eggNOG" id="COG0220">
    <property type="taxonomic scope" value="Bacteria"/>
</dbReference>
<dbReference type="HOGENOM" id="CLU_050910_0_2_11"/>
<dbReference type="UniPathway" id="UPA00989"/>
<dbReference type="Proteomes" id="UP000000765">
    <property type="component" value="Chromosome"/>
</dbReference>
<dbReference type="GO" id="GO:0043527">
    <property type="term" value="C:tRNA methyltransferase complex"/>
    <property type="evidence" value="ECO:0007669"/>
    <property type="project" value="TreeGrafter"/>
</dbReference>
<dbReference type="GO" id="GO:0008176">
    <property type="term" value="F:tRNA (guanine(46)-N7)-methyltransferase activity"/>
    <property type="evidence" value="ECO:0007669"/>
    <property type="project" value="UniProtKB-UniRule"/>
</dbReference>
<dbReference type="CDD" id="cd02440">
    <property type="entry name" value="AdoMet_MTases"/>
    <property type="match status" value="1"/>
</dbReference>
<dbReference type="Gene3D" id="3.40.50.150">
    <property type="entry name" value="Vaccinia Virus protein VP39"/>
    <property type="match status" value="1"/>
</dbReference>
<dbReference type="HAMAP" id="MF_01057">
    <property type="entry name" value="tRNA_methyltr_TrmB"/>
    <property type="match status" value="1"/>
</dbReference>
<dbReference type="InterPro" id="IPR029063">
    <property type="entry name" value="SAM-dependent_MTases_sf"/>
</dbReference>
<dbReference type="InterPro" id="IPR003358">
    <property type="entry name" value="tRNA_(Gua-N-7)_MeTrfase_Trmb"/>
</dbReference>
<dbReference type="InterPro" id="IPR055361">
    <property type="entry name" value="tRNA_methyltr_TrmB_bact"/>
</dbReference>
<dbReference type="NCBIfam" id="TIGR00091">
    <property type="entry name" value="tRNA (guanosine(46)-N7)-methyltransferase TrmB"/>
    <property type="match status" value="1"/>
</dbReference>
<dbReference type="PANTHER" id="PTHR23417">
    <property type="entry name" value="3-DEOXY-D-MANNO-OCTULOSONIC-ACID TRANSFERASE/TRNA GUANINE-N 7 - -METHYLTRANSFERASE"/>
    <property type="match status" value="1"/>
</dbReference>
<dbReference type="PANTHER" id="PTHR23417:SF14">
    <property type="entry name" value="PENTACOTRIPEPTIDE-REPEAT REGION OF PRORP DOMAIN-CONTAINING PROTEIN"/>
    <property type="match status" value="1"/>
</dbReference>
<dbReference type="Pfam" id="PF02390">
    <property type="entry name" value="Methyltransf_4"/>
    <property type="match status" value="1"/>
</dbReference>
<dbReference type="SUPFAM" id="SSF53335">
    <property type="entry name" value="S-adenosyl-L-methionine-dependent methyltransferases"/>
    <property type="match status" value="1"/>
</dbReference>
<dbReference type="PROSITE" id="PS51625">
    <property type="entry name" value="SAM_MT_TRMB"/>
    <property type="match status" value="1"/>
</dbReference>
<reference key="1">
    <citation type="journal article" date="2007" name="Genome Res.">
        <title>Reductive evolution and niche adaptation inferred from the genome of Mycobacterium ulcerans, the causative agent of Buruli ulcer.</title>
        <authorList>
            <person name="Stinear T.P."/>
            <person name="Seemann T."/>
            <person name="Pidot S."/>
            <person name="Frigui W."/>
            <person name="Reysset G."/>
            <person name="Garnier T."/>
            <person name="Meurice G."/>
            <person name="Simon D."/>
            <person name="Bouchier C."/>
            <person name="Ma L."/>
            <person name="Tichit M."/>
            <person name="Porter J.L."/>
            <person name="Ryan J."/>
            <person name="Johnson P.D.R."/>
            <person name="Davies J.K."/>
            <person name="Jenkin G.A."/>
            <person name="Small P.L.C."/>
            <person name="Jones L.M."/>
            <person name="Tekaia F."/>
            <person name="Laval F."/>
            <person name="Daffe M."/>
            <person name="Parkhill J."/>
            <person name="Cole S.T."/>
        </authorList>
    </citation>
    <scope>NUCLEOTIDE SEQUENCE [LARGE SCALE GENOMIC DNA]</scope>
    <source>
        <strain>Agy99</strain>
    </source>
</reference>
<name>TRMB_MYCUA</name>
<comment type="function">
    <text evidence="2">Catalyzes the formation of N(7)-methylguanine at position 46 (m7G46) in tRNA.</text>
</comment>
<comment type="catalytic activity">
    <reaction evidence="2">
        <text>guanosine(46) in tRNA + S-adenosyl-L-methionine = N(7)-methylguanosine(46) in tRNA + S-adenosyl-L-homocysteine</text>
        <dbReference type="Rhea" id="RHEA:42708"/>
        <dbReference type="Rhea" id="RHEA-COMP:10188"/>
        <dbReference type="Rhea" id="RHEA-COMP:10189"/>
        <dbReference type="ChEBI" id="CHEBI:57856"/>
        <dbReference type="ChEBI" id="CHEBI:59789"/>
        <dbReference type="ChEBI" id="CHEBI:74269"/>
        <dbReference type="ChEBI" id="CHEBI:74480"/>
        <dbReference type="EC" id="2.1.1.33"/>
    </reaction>
</comment>
<comment type="pathway">
    <text evidence="2">tRNA modification; N(7)-methylguanine-tRNA biosynthesis.</text>
</comment>
<comment type="similarity">
    <text evidence="2">Belongs to the class I-like SAM-binding methyltransferase superfamily. TrmB family.</text>
</comment>
<keyword id="KW-0489">Methyltransferase</keyword>
<keyword id="KW-0949">S-adenosyl-L-methionine</keyword>
<keyword id="KW-0808">Transferase</keyword>
<keyword id="KW-0819">tRNA processing</keyword>
<protein>
    <recommendedName>
        <fullName evidence="2">tRNA (guanine-N(7)-)-methyltransferase</fullName>
        <ecNumber evidence="2">2.1.1.33</ecNumber>
    </recommendedName>
    <alternativeName>
        <fullName evidence="2">tRNA (guanine(46)-N(7))-methyltransferase</fullName>
    </alternativeName>
    <alternativeName>
        <fullName evidence="2">tRNA(m7G46)-methyltransferase</fullName>
    </alternativeName>
</protein>
<feature type="chain" id="PRO_0000288184" description="tRNA (guanine-N(7)-)-methyltransferase">
    <location>
        <begin position="1"/>
        <end position="278"/>
    </location>
</feature>
<feature type="region of interest" description="Disordered" evidence="3">
    <location>
        <begin position="1"/>
        <end position="42"/>
    </location>
</feature>
<feature type="active site" evidence="1">
    <location>
        <position position="183"/>
    </location>
</feature>
<feature type="binding site" evidence="2">
    <location>
        <position position="106"/>
    </location>
    <ligand>
        <name>S-adenosyl-L-methionine</name>
        <dbReference type="ChEBI" id="CHEBI:59789"/>
    </ligand>
</feature>
<feature type="binding site" evidence="2">
    <location>
        <position position="131"/>
    </location>
    <ligand>
        <name>S-adenosyl-L-methionine</name>
        <dbReference type="ChEBI" id="CHEBI:59789"/>
    </ligand>
</feature>
<feature type="binding site" evidence="2">
    <location>
        <position position="160"/>
    </location>
    <ligand>
        <name>S-adenosyl-L-methionine</name>
        <dbReference type="ChEBI" id="CHEBI:59789"/>
    </ligand>
</feature>
<feature type="binding site" evidence="2">
    <location>
        <position position="183"/>
    </location>
    <ligand>
        <name>S-adenosyl-L-methionine</name>
        <dbReference type="ChEBI" id="CHEBI:59789"/>
    </ligand>
</feature>
<feature type="binding site" evidence="2">
    <location>
        <position position="187"/>
    </location>
    <ligand>
        <name>substrate</name>
    </ligand>
</feature>
<feature type="binding site" evidence="2">
    <location>
        <position position="219"/>
    </location>
    <ligand>
        <name>substrate</name>
    </ligand>
</feature>
<feature type="binding site" evidence="2">
    <location>
        <begin position="256"/>
        <end position="259"/>
    </location>
    <ligand>
        <name>substrate</name>
    </ligand>
</feature>
<sequence>MRHDGPMHVQPGVGLQSDTSSSTGTGSGPADEPEAEKSAWGYLPPTAFRSRHSALSSIQQQTWERRWPQLGRQATAHSQPSARGHEPIDPIDARAWFGREAPVVLEIGCGSGTSTLAMAQAEPNVDVIAVEVYRRGLAQLLCAIDRADLQRINIRLIRGNGIDVLRDLIAPESLTGVRVFFPDPWPKARHHKRRLIQPSTVVLIADRLLPGGVFHAATDHPGYAEHIIAAGDAEPALARVDPGVDSLPVSVVRPTTKYEMKAHNAGSSINELIWKKQR</sequence>
<accession>A0PMW8</accession>
<proteinExistence type="inferred from homology"/>